<organism>
    <name type="scientific">Vibrio vulnificus (strain CMCP6)</name>
    <dbReference type="NCBI Taxonomy" id="216895"/>
    <lineage>
        <taxon>Bacteria</taxon>
        <taxon>Pseudomonadati</taxon>
        <taxon>Pseudomonadota</taxon>
        <taxon>Gammaproteobacteria</taxon>
        <taxon>Vibrionales</taxon>
        <taxon>Vibrionaceae</taxon>
        <taxon>Vibrio</taxon>
    </lineage>
</organism>
<protein>
    <recommendedName>
        <fullName evidence="1">Large ribosomal subunit protein uL11</fullName>
    </recommendedName>
    <alternativeName>
        <fullName evidence="2">50S ribosomal protein L11</fullName>
    </alternativeName>
</protein>
<reference key="1">
    <citation type="submission" date="2002-12" db="EMBL/GenBank/DDBJ databases">
        <title>Complete genome sequence of Vibrio vulnificus CMCP6.</title>
        <authorList>
            <person name="Rhee J.H."/>
            <person name="Kim S.Y."/>
            <person name="Chung S.S."/>
            <person name="Kim J.J."/>
            <person name="Moon Y.H."/>
            <person name="Jeong H."/>
            <person name="Choy H.E."/>
        </authorList>
    </citation>
    <scope>NUCLEOTIDE SEQUENCE [LARGE SCALE GENOMIC DNA]</scope>
    <source>
        <strain>CMCP6</strain>
    </source>
</reference>
<proteinExistence type="inferred from homology"/>
<gene>
    <name evidence="1" type="primary">rplK</name>
    <name type="ordered locus">VV1_1207</name>
</gene>
<sequence>MAKKVEAYIKLQVAAGMANPSPPVGPALGQRGVNIMEFCKAFNAKTESMEKGLPVPVVITVYSDRSFTFVTKTSPAAVLLKKAAGIKSGSGRPNTEKVGTVTDAQIQEIAEAKAADMTGADIEAMKRSIAGTARSMGLVVEG</sequence>
<accession>Q8DD24</accession>
<feature type="chain" id="PRO_0000104409" description="Large ribosomal subunit protein uL11">
    <location>
        <begin position="1"/>
        <end position="142"/>
    </location>
</feature>
<comment type="function">
    <text evidence="1">Forms part of the ribosomal stalk which helps the ribosome interact with GTP-bound translation factors.</text>
</comment>
<comment type="subunit">
    <text evidence="1">Part of the ribosomal stalk of the 50S ribosomal subunit. Interacts with L10 and the large rRNA to form the base of the stalk. L10 forms an elongated spine to which L12 dimers bind in a sequential fashion forming a multimeric L10(L12)X complex.</text>
</comment>
<comment type="PTM">
    <text evidence="1">One or more lysine residues are methylated.</text>
</comment>
<comment type="similarity">
    <text evidence="1">Belongs to the universal ribosomal protein uL11 family.</text>
</comment>
<name>RL11_VIBVU</name>
<keyword id="KW-0488">Methylation</keyword>
<keyword id="KW-0687">Ribonucleoprotein</keyword>
<keyword id="KW-0689">Ribosomal protein</keyword>
<keyword id="KW-0694">RNA-binding</keyword>
<keyword id="KW-0699">rRNA-binding</keyword>
<evidence type="ECO:0000255" key="1">
    <source>
        <dbReference type="HAMAP-Rule" id="MF_00736"/>
    </source>
</evidence>
<evidence type="ECO:0000305" key="2"/>
<dbReference type="EMBL" id="AE016795">
    <property type="protein sequence ID" value="AAO09667.1"/>
    <property type="molecule type" value="Genomic_DNA"/>
</dbReference>
<dbReference type="RefSeq" id="WP_011079197.1">
    <property type="nucleotide sequence ID" value="NC_004459.3"/>
</dbReference>
<dbReference type="SMR" id="Q8DD24"/>
<dbReference type="GeneID" id="95678805"/>
<dbReference type="KEGG" id="vvu:VV1_1207"/>
<dbReference type="HOGENOM" id="CLU_074237_2_0_6"/>
<dbReference type="Proteomes" id="UP000002275">
    <property type="component" value="Chromosome 1"/>
</dbReference>
<dbReference type="GO" id="GO:0022625">
    <property type="term" value="C:cytosolic large ribosomal subunit"/>
    <property type="evidence" value="ECO:0007669"/>
    <property type="project" value="TreeGrafter"/>
</dbReference>
<dbReference type="GO" id="GO:0070180">
    <property type="term" value="F:large ribosomal subunit rRNA binding"/>
    <property type="evidence" value="ECO:0007669"/>
    <property type="project" value="UniProtKB-UniRule"/>
</dbReference>
<dbReference type="GO" id="GO:0003735">
    <property type="term" value="F:structural constituent of ribosome"/>
    <property type="evidence" value="ECO:0007669"/>
    <property type="project" value="InterPro"/>
</dbReference>
<dbReference type="GO" id="GO:0006412">
    <property type="term" value="P:translation"/>
    <property type="evidence" value="ECO:0007669"/>
    <property type="project" value="UniProtKB-UniRule"/>
</dbReference>
<dbReference type="CDD" id="cd00349">
    <property type="entry name" value="Ribosomal_L11"/>
    <property type="match status" value="1"/>
</dbReference>
<dbReference type="FunFam" id="1.10.10.250:FF:000001">
    <property type="entry name" value="50S ribosomal protein L11"/>
    <property type="match status" value="1"/>
</dbReference>
<dbReference type="FunFam" id="3.30.1550.10:FF:000001">
    <property type="entry name" value="50S ribosomal protein L11"/>
    <property type="match status" value="1"/>
</dbReference>
<dbReference type="Gene3D" id="1.10.10.250">
    <property type="entry name" value="Ribosomal protein L11, C-terminal domain"/>
    <property type="match status" value="1"/>
</dbReference>
<dbReference type="Gene3D" id="3.30.1550.10">
    <property type="entry name" value="Ribosomal protein L11/L12, N-terminal domain"/>
    <property type="match status" value="1"/>
</dbReference>
<dbReference type="HAMAP" id="MF_00736">
    <property type="entry name" value="Ribosomal_uL11"/>
    <property type="match status" value="1"/>
</dbReference>
<dbReference type="InterPro" id="IPR000911">
    <property type="entry name" value="Ribosomal_uL11"/>
</dbReference>
<dbReference type="InterPro" id="IPR006519">
    <property type="entry name" value="Ribosomal_uL11_bac-typ"/>
</dbReference>
<dbReference type="InterPro" id="IPR020783">
    <property type="entry name" value="Ribosomal_uL11_C"/>
</dbReference>
<dbReference type="InterPro" id="IPR036769">
    <property type="entry name" value="Ribosomal_uL11_C_sf"/>
</dbReference>
<dbReference type="InterPro" id="IPR020785">
    <property type="entry name" value="Ribosomal_uL11_CS"/>
</dbReference>
<dbReference type="InterPro" id="IPR020784">
    <property type="entry name" value="Ribosomal_uL11_N"/>
</dbReference>
<dbReference type="InterPro" id="IPR036796">
    <property type="entry name" value="Ribosomal_uL11_N_sf"/>
</dbReference>
<dbReference type="NCBIfam" id="TIGR01632">
    <property type="entry name" value="L11_bact"/>
    <property type="match status" value="1"/>
</dbReference>
<dbReference type="PANTHER" id="PTHR11661">
    <property type="entry name" value="60S RIBOSOMAL PROTEIN L12"/>
    <property type="match status" value="1"/>
</dbReference>
<dbReference type="PANTHER" id="PTHR11661:SF1">
    <property type="entry name" value="LARGE RIBOSOMAL SUBUNIT PROTEIN UL11M"/>
    <property type="match status" value="1"/>
</dbReference>
<dbReference type="Pfam" id="PF00298">
    <property type="entry name" value="Ribosomal_L11"/>
    <property type="match status" value="1"/>
</dbReference>
<dbReference type="Pfam" id="PF03946">
    <property type="entry name" value="Ribosomal_L11_N"/>
    <property type="match status" value="1"/>
</dbReference>
<dbReference type="SMART" id="SM00649">
    <property type="entry name" value="RL11"/>
    <property type="match status" value="1"/>
</dbReference>
<dbReference type="SUPFAM" id="SSF54747">
    <property type="entry name" value="Ribosomal L11/L12e N-terminal domain"/>
    <property type="match status" value="1"/>
</dbReference>
<dbReference type="SUPFAM" id="SSF46906">
    <property type="entry name" value="Ribosomal protein L11, C-terminal domain"/>
    <property type="match status" value="1"/>
</dbReference>
<dbReference type="PROSITE" id="PS00359">
    <property type="entry name" value="RIBOSOMAL_L11"/>
    <property type="match status" value="1"/>
</dbReference>